<gene>
    <name evidence="4" type="ordered locus">YIL071W-A</name>
</gene>
<reference key="1">
    <citation type="journal article" date="1997" name="Nature">
        <title>The nucleotide sequence of Saccharomyces cerevisiae chromosome IX.</title>
        <authorList>
            <person name="Churcher C.M."/>
            <person name="Bowman S."/>
            <person name="Badcock K."/>
            <person name="Bankier A.T."/>
            <person name="Brown D."/>
            <person name="Chillingworth T."/>
            <person name="Connor R."/>
            <person name="Devlin K."/>
            <person name="Gentles S."/>
            <person name="Hamlin N."/>
            <person name="Harris D.E."/>
            <person name="Horsnell T."/>
            <person name="Hunt S."/>
            <person name="Jagels K."/>
            <person name="Jones M."/>
            <person name="Lye G."/>
            <person name="Moule S."/>
            <person name="Odell C."/>
            <person name="Pearson D."/>
            <person name="Rajandream M.A."/>
            <person name="Rice P."/>
            <person name="Rowley N."/>
            <person name="Skelton J."/>
            <person name="Smith V."/>
            <person name="Walsh S.V."/>
            <person name="Whitehead S."/>
            <person name="Barrell B.G."/>
        </authorList>
    </citation>
    <scope>NUCLEOTIDE SEQUENCE [LARGE SCALE GENOMIC DNA]</scope>
    <source>
        <strain>ATCC 204508 / S288c</strain>
    </source>
</reference>
<reference key="2">
    <citation type="journal article" date="2014" name="G3 (Bethesda)">
        <title>The reference genome sequence of Saccharomyces cerevisiae: Then and now.</title>
        <authorList>
            <person name="Engel S.R."/>
            <person name="Dietrich F.S."/>
            <person name="Fisk D.G."/>
            <person name="Binkley G."/>
            <person name="Balakrishnan R."/>
            <person name="Costanzo M.C."/>
            <person name="Dwight S.S."/>
            <person name="Hitz B.C."/>
            <person name="Karra K."/>
            <person name="Nash R.S."/>
            <person name="Weng S."/>
            <person name="Wong E.D."/>
            <person name="Lloyd P."/>
            <person name="Skrzypek M.S."/>
            <person name="Miyasato S.R."/>
            <person name="Simison M."/>
            <person name="Cherry J.M."/>
        </authorList>
    </citation>
    <scope>GENOME REANNOTATION</scope>
    <source>
        <strain>ATCC 204508 / S288c</strain>
    </source>
</reference>
<accession>A0A023PZF3</accession>
<dbReference type="EMBL" id="KJ412273">
    <property type="protein sequence ID" value="AHX39316.1"/>
    <property type="molecule type" value="Genomic_DNA"/>
</dbReference>
<dbReference type="STRING" id="4932.YIL071W-A"/>
<dbReference type="PaxDb" id="4932-YIL071W-A"/>
<dbReference type="EnsemblFungi" id="YIL071W-A_mRNA">
    <property type="protein sequence ID" value="YIL071W-A"/>
    <property type="gene ID" value="YIL071W-A"/>
</dbReference>
<dbReference type="AGR" id="SGD:S000028793"/>
<dbReference type="SGD" id="S000028793">
    <property type="gene designation" value="YIL071W-A"/>
</dbReference>
<dbReference type="HOGENOM" id="CLU_1670387_0_0_1"/>
<dbReference type="GO" id="GO:0016020">
    <property type="term" value="C:membrane"/>
    <property type="evidence" value="ECO:0007669"/>
    <property type="project" value="UniProtKB-SubCell"/>
</dbReference>
<feature type="chain" id="PRO_0000431037" description="Putative uncharacterized protein YIL071W-A">
    <location>
        <begin position="1"/>
        <end position="158"/>
    </location>
</feature>
<feature type="transmembrane region" description="Helical; Name=1" evidence="1">
    <location>
        <begin position="66"/>
        <end position="86"/>
    </location>
</feature>
<feature type="transmembrane region" description="Helical; Name=2" evidence="1">
    <location>
        <begin position="94"/>
        <end position="114"/>
    </location>
</feature>
<evidence type="ECO:0000255" key="1"/>
<evidence type="ECO:0000305" key="2"/>
<evidence type="ECO:0000305" key="3">
    <source>
    </source>
</evidence>
<evidence type="ECO:0000312" key="4">
    <source>
        <dbReference type="SGD" id="S000028793"/>
    </source>
</evidence>
<name>YI070_YEAST</name>
<keyword id="KW-0472">Membrane</keyword>
<keyword id="KW-0812">Transmembrane</keyword>
<keyword id="KW-1133">Transmembrane helix</keyword>
<proteinExistence type="uncertain"/>
<protein>
    <recommendedName>
        <fullName evidence="2">Putative uncharacterized protein YIL071W-A</fullName>
    </recommendedName>
</protein>
<sequence length="158" mass="17541">MNNKVTLLPPRVFFCLSWSVMVNIDRRKSDRSVNLDDQHSNKPPSESLISLLSLTSSMSISSLLSLLIIVAVLFPPLYISGLPWIMSFKSVFSFFSLSITSFIMVPFLLISLTILCKIELSSKCITSPSISKFNCPDIINFVNSSLISSKSIPSVDDK</sequence>
<comment type="subcellular location">
    <subcellularLocation>
        <location evidence="1">Membrane</location>
        <topology evidence="1">Multi-pass membrane protein</topology>
    </subcellularLocation>
</comment>
<comment type="miscellaneous">
    <text evidence="2">Partially overlaps PCI8.</text>
</comment>
<comment type="caution">
    <text evidence="3">Product of a dubious gene prediction unlikely to encode a functional protein. Because of that it is not part of the S.cerevisiae S288c complete/reference proteome set.</text>
</comment>
<organism>
    <name type="scientific">Saccharomyces cerevisiae (strain ATCC 204508 / S288c)</name>
    <name type="common">Baker's yeast</name>
    <dbReference type="NCBI Taxonomy" id="559292"/>
    <lineage>
        <taxon>Eukaryota</taxon>
        <taxon>Fungi</taxon>
        <taxon>Dikarya</taxon>
        <taxon>Ascomycota</taxon>
        <taxon>Saccharomycotina</taxon>
        <taxon>Saccharomycetes</taxon>
        <taxon>Saccharomycetales</taxon>
        <taxon>Saccharomycetaceae</taxon>
        <taxon>Saccharomyces</taxon>
    </lineage>
</organism>